<evidence type="ECO:0000250" key="1"/>
<evidence type="ECO:0000255" key="2">
    <source>
        <dbReference type="HAMAP-Rule" id="MF_04076"/>
    </source>
</evidence>
<evidence type="ECO:0000256" key="3">
    <source>
        <dbReference type="SAM" id="MobiDB-lite"/>
    </source>
</evidence>
<reference key="1">
    <citation type="journal article" date="2002" name="J. Gen. Virol.">
        <title>The dominant hepatitis B virus genotype identified in Tibet is a C/D hybrid.</title>
        <authorList>
            <person name="Cui C."/>
            <person name="Shi J."/>
            <person name="Hui L."/>
            <person name="Xi H."/>
            <person name="Zhuoma X."/>
            <person name="Quni X."/>
            <person name="Tsedan X."/>
            <person name="Hu G."/>
        </authorList>
    </citation>
    <scope>NUCLEOTIDE SEQUENCE [GENOMIC DNA]</scope>
</reference>
<sequence>MQLFHLCLIISCSCPTVQASKLCLGWLWGMDIDPYKEFGASVEVLSFLPSDFFPSNRDLLDTASALDREALESPEHCSPHHTALRQAILCWGELMNLATWVGSNLEDPASRELVVSYVNVNMGLKIRQLLWFHISCLTFGRETVLEYLVSFGVWIRTPPAYRPPNAPILSTLPETTVVRRRGRSPRRRTPSPRRRRSQSPRRRRSQSRESQC</sequence>
<gene>
    <name evidence="2" type="primary">C</name>
</gene>
<protein>
    <recommendedName>
        <fullName evidence="2">External core antigen</fullName>
    </recommendedName>
    <alternativeName>
        <fullName evidence="2">HBeAg</fullName>
    </alternativeName>
    <alternativeName>
        <fullName evidence="2">Precore protein</fullName>
    </alternativeName>
    <alternativeName>
        <fullName evidence="2">p25</fullName>
    </alternativeName>
</protein>
<keyword id="KW-0024">Alternative initiation</keyword>
<keyword id="KW-1015">Disulfide bond</keyword>
<keyword id="KW-1048">Host nucleus</keyword>
<keyword id="KW-0945">Host-virus interaction</keyword>
<keyword id="KW-0677">Repeat</keyword>
<keyword id="KW-0964">Secreted</keyword>
<keyword id="KW-0732">Signal</keyword>
<keyword id="KW-0899">Viral immunoevasion</keyword>
<organism>
    <name type="scientific">Hepatitis B virus genotype C subtype ayw (isolate China/Tibet127/2002)</name>
    <name type="common">HBV-C</name>
    <dbReference type="NCBI Taxonomy" id="489469"/>
    <lineage>
        <taxon>Viruses</taxon>
        <taxon>Riboviria</taxon>
        <taxon>Pararnavirae</taxon>
        <taxon>Artverviricota</taxon>
        <taxon>Revtraviricetes</taxon>
        <taxon>Blubervirales</taxon>
        <taxon>Hepadnaviridae</taxon>
        <taxon>Orthohepadnavirus</taxon>
        <taxon>Hepatitis B virus</taxon>
        <taxon>hepatitis B virus genotype C</taxon>
    </lineage>
</organism>
<dbReference type="EMBL" id="AY057948">
    <property type="protein sequence ID" value="AAL25950.1"/>
    <property type="molecule type" value="Genomic_DNA"/>
</dbReference>
<dbReference type="SMR" id="Q913A8"/>
<dbReference type="Proteomes" id="UP000007925">
    <property type="component" value="Genome"/>
</dbReference>
<dbReference type="GO" id="GO:0005576">
    <property type="term" value="C:extracellular region"/>
    <property type="evidence" value="ECO:0007669"/>
    <property type="project" value="UniProtKB-SubCell"/>
</dbReference>
<dbReference type="GO" id="GO:0043657">
    <property type="term" value="C:host cell"/>
    <property type="evidence" value="ECO:0007669"/>
    <property type="project" value="GOC"/>
</dbReference>
<dbReference type="GO" id="GO:0030430">
    <property type="term" value="C:host cell cytoplasm"/>
    <property type="evidence" value="ECO:0007669"/>
    <property type="project" value="UniProtKB-UniRule"/>
</dbReference>
<dbReference type="GO" id="GO:0042025">
    <property type="term" value="C:host cell nucleus"/>
    <property type="evidence" value="ECO:0007669"/>
    <property type="project" value="UniProtKB-SubCell"/>
</dbReference>
<dbReference type="GO" id="GO:0039619">
    <property type="term" value="C:T=4 icosahedral viral capsid"/>
    <property type="evidence" value="ECO:0007669"/>
    <property type="project" value="UniProtKB-UniRule"/>
</dbReference>
<dbReference type="GO" id="GO:0003677">
    <property type="term" value="F:DNA binding"/>
    <property type="evidence" value="ECO:0007669"/>
    <property type="project" value="UniProtKB-UniRule"/>
</dbReference>
<dbReference type="GO" id="GO:0003723">
    <property type="term" value="F:RNA binding"/>
    <property type="evidence" value="ECO:0007669"/>
    <property type="project" value="UniProtKB-UniRule"/>
</dbReference>
<dbReference type="GO" id="GO:0005198">
    <property type="term" value="F:structural molecule activity"/>
    <property type="evidence" value="ECO:0007669"/>
    <property type="project" value="UniProtKB-UniRule"/>
</dbReference>
<dbReference type="GO" id="GO:0075521">
    <property type="term" value="P:microtubule-dependent intracellular transport of viral material towards nucleus"/>
    <property type="evidence" value="ECO:0007669"/>
    <property type="project" value="UniProtKB-UniRule"/>
</dbReference>
<dbReference type="GO" id="GO:0046718">
    <property type="term" value="P:symbiont entry into host cell"/>
    <property type="evidence" value="ECO:0007669"/>
    <property type="project" value="UniProtKB-UniRule"/>
</dbReference>
<dbReference type="GO" id="GO:0075732">
    <property type="term" value="P:viral penetration into host nucleus"/>
    <property type="evidence" value="ECO:0007669"/>
    <property type="project" value="UniProtKB-UniRule"/>
</dbReference>
<dbReference type="FunFam" id="1.10.4090.10:FF:000001">
    <property type="entry name" value="Capsid protein"/>
    <property type="match status" value="1"/>
</dbReference>
<dbReference type="Gene3D" id="1.10.4090.10">
    <property type="entry name" value="Viral capsid, core domain supefamily, Hepatitis B virus"/>
    <property type="match status" value="1"/>
</dbReference>
<dbReference type="HAMAP" id="MF_04076">
    <property type="entry name" value="HBV_HBEAG"/>
    <property type="match status" value="1"/>
</dbReference>
<dbReference type="InterPro" id="IPR013195">
    <property type="entry name" value="Hepatitis_B_virus_capsid_N"/>
</dbReference>
<dbReference type="InterPro" id="IPR002006">
    <property type="entry name" value="Hepatitis_core"/>
</dbReference>
<dbReference type="InterPro" id="IPR036459">
    <property type="entry name" value="Viral_capsid_core_dom_sf_HBV"/>
</dbReference>
<dbReference type="Pfam" id="PF08290">
    <property type="entry name" value="Hep_core_N"/>
    <property type="match status" value="1"/>
</dbReference>
<dbReference type="Pfam" id="PF00906">
    <property type="entry name" value="Hepatitis_core"/>
    <property type="match status" value="3"/>
</dbReference>
<dbReference type="SUPFAM" id="SSF47852">
    <property type="entry name" value="Hepatitis B viral capsid (hbcag)"/>
    <property type="match status" value="1"/>
</dbReference>
<proteinExistence type="inferred from homology"/>
<feature type="signal peptide" evidence="2">
    <location>
        <begin position="1"/>
        <end position="19"/>
    </location>
</feature>
<feature type="chain" id="PRO_0000324720" description="External core antigen" evidence="2">
    <location>
        <begin position="20"/>
        <end position="212"/>
    </location>
</feature>
<feature type="propeptide" id="PRO_0000324721" evidence="1">
    <location>
        <begin position="184"/>
        <end position="212"/>
    </location>
</feature>
<feature type="repeat" description="1; half-length">
    <location>
        <begin position="184"/>
        <end position="190"/>
    </location>
</feature>
<feature type="repeat" description="2">
    <location>
        <begin position="191"/>
        <end position="198"/>
    </location>
</feature>
<feature type="repeat" description="3">
    <location>
        <begin position="199"/>
        <end position="206"/>
    </location>
</feature>
<feature type="region of interest" description="HBEAG" evidence="2">
    <location>
        <begin position="25"/>
        <end position="27"/>
    </location>
</feature>
<feature type="region of interest" description="Disordered" evidence="3">
    <location>
        <begin position="165"/>
        <end position="212"/>
    </location>
</feature>
<feature type="region of interest" description="3 X 8 AA repeats of S-P-R-R-R-R-S-Q">
    <location>
        <begin position="184"/>
        <end position="206"/>
    </location>
</feature>
<feature type="compositionally biased region" description="Basic residues" evidence="3">
    <location>
        <begin position="178"/>
        <end position="205"/>
    </location>
</feature>
<feature type="site" description="Cleavage; by host" evidence="2">
    <location>
        <begin position="183"/>
        <end position="184"/>
    </location>
</feature>
<feature type="disulfide bond" description="Interchain" evidence="2">
    <location>
        <position position="77"/>
    </location>
</feature>
<feature type="disulfide bond" description="Interchain" evidence="2">
    <location>
        <position position="90"/>
    </location>
</feature>
<organismHost>
    <name type="scientific">Homo sapiens</name>
    <name type="common">Human</name>
    <dbReference type="NCBI Taxonomy" id="9606"/>
</organismHost>
<organismHost>
    <name type="scientific">Pan troglodytes</name>
    <name type="common">Chimpanzee</name>
    <dbReference type="NCBI Taxonomy" id="9598"/>
</organismHost>
<comment type="function">
    <text evidence="2">May regulate immune response to the intracellular capsid in acting as a T-cell tolerogen, by having an immunoregulatory effect which prevents destruction of infected cells by cytotoxic T-cells. This immune regulation may predispose to chronicity during perinatal infections and prevent severe liver injury during adult infections.</text>
</comment>
<comment type="subunit">
    <text evidence="2">Homodimerizes.</text>
</comment>
<comment type="subcellular location">
    <subcellularLocation>
        <location evidence="2">Secreted</location>
    </subcellularLocation>
    <subcellularLocation>
        <location evidence="2">Host nucleus</location>
    </subcellularLocation>
</comment>
<comment type="alternative products">
    <event type="alternative initiation"/>
    <isoform>
        <id>Q913A8-1</id>
        <name>External core antigen</name>
        <sequence type="displayed"/>
    </isoform>
    <isoform>
        <id>P0C6H7-1</id>
        <name>Capsid protein</name>
        <sequence type="external"/>
    </isoform>
</comment>
<comment type="PTM">
    <text evidence="2">Phosphorylated.</text>
</comment>
<comment type="PTM">
    <text evidence="2">Cleaved by host furin.</text>
</comment>
<comment type="similarity">
    <text evidence="2">Belongs to the orthohepadnavirus precore antigen family.</text>
</comment>
<name>HBEAG_HBVC7</name>
<accession>Q913A8</accession>